<comment type="function">
    <text evidence="1">An aminoacyl-tRNA editing enzyme that deacylates mischarged D-aminoacyl-tRNAs. Also deacylates mischarged glycyl-tRNA(Ala), protecting cells against glycine mischarging by AlaRS. Acts via tRNA-based rather than protein-based catalysis; rejects L-amino acids rather than detecting D-amino acids in the active site. By recycling D-aminoacyl-tRNA to D-amino acids and free tRNA molecules, this enzyme counteracts the toxicity associated with the formation of D-aminoacyl-tRNA entities in vivo and helps enforce protein L-homochirality.</text>
</comment>
<comment type="catalytic activity">
    <reaction evidence="1">
        <text>glycyl-tRNA(Ala) + H2O = tRNA(Ala) + glycine + H(+)</text>
        <dbReference type="Rhea" id="RHEA:53744"/>
        <dbReference type="Rhea" id="RHEA-COMP:9657"/>
        <dbReference type="Rhea" id="RHEA-COMP:13640"/>
        <dbReference type="ChEBI" id="CHEBI:15377"/>
        <dbReference type="ChEBI" id="CHEBI:15378"/>
        <dbReference type="ChEBI" id="CHEBI:57305"/>
        <dbReference type="ChEBI" id="CHEBI:78442"/>
        <dbReference type="ChEBI" id="CHEBI:78522"/>
        <dbReference type="EC" id="3.1.1.96"/>
    </reaction>
</comment>
<comment type="catalytic activity">
    <reaction evidence="1">
        <text>a D-aminoacyl-tRNA + H2O = a tRNA + a D-alpha-amino acid + H(+)</text>
        <dbReference type="Rhea" id="RHEA:13953"/>
        <dbReference type="Rhea" id="RHEA-COMP:10123"/>
        <dbReference type="Rhea" id="RHEA-COMP:10124"/>
        <dbReference type="ChEBI" id="CHEBI:15377"/>
        <dbReference type="ChEBI" id="CHEBI:15378"/>
        <dbReference type="ChEBI" id="CHEBI:59871"/>
        <dbReference type="ChEBI" id="CHEBI:78442"/>
        <dbReference type="ChEBI" id="CHEBI:79333"/>
        <dbReference type="EC" id="3.1.1.96"/>
    </reaction>
</comment>
<comment type="subunit">
    <text evidence="1">Homodimer.</text>
</comment>
<comment type="subcellular location">
    <subcellularLocation>
        <location evidence="1">Cytoplasm</location>
    </subcellularLocation>
</comment>
<comment type="domain">
    <text evidence="1">A Gly-cisPro motif from one monomer fits into the active site of the other monomer to allow specific chiral rejection of L-amino acids.</text>
</comment>
<comment type="similarity">
    <text evidence="1">Belongs to the DTD family.</text>
</comment>
<name>DTD_ECO45</name>
<reference key="1">
    <citation type="journal article" date="2009" name="PLoS Genet.">
        <title>Organised genome dynamics in the Escherichia coli species results in highly diverse adaptive paths.</title>
        <authorList>
            <person name="Touchon M."/>
            <person name="Hoede C."/>
            <person name="Tenaillon O."/>
            <person name="Barbe V."/>
            <person name="Baeriswyl S."/>
            <person name="Bidet P."/>
            <person name="Bingen E."/>
            <person name="Bonacorsi S."/>
            <person name="Bouchier C."/>
            <person name="Bouvet O."/>
            <person name="Calteau A."/>
            <person name="Chiapello H."/>
            <person name="Clermont O."/>
            <person name="Cruveiller S."/>
            <person name="Danchin A."/>
            <person name="Diard M."/>
            <person name="Dossat C."/>
            <person name="Karoui M.E."/>
            <person name="Frapy E."/>
            <person name="Garry L."/>
            <person name="Ghigo J.M."/>
            <person name="Gilles A.M."/>
            <person name="Johnson J."/>
            <person name="Le Bouguenec C."/>
            <person name="Lescat M."/>
            <person name="Mangenot S."/>
            <person name="Martinez-Jehanne V."/>
            <person name="Matic I."/>
            <person name="Nassif X."/>
            <person name="Oztas S."/>
            <person name="Petit M.A."/>
            <person name="Pichon C."/>
            <person name="Rouy Z."/>
            <person name="Ruf C.S."/>
            <person name="Schneider D."/>
            <person name="Tourret J."/>
            <person name="Vacherie B."/>
            <person name="Vallenet D."/>
            <person name="Medigue C."/>
            <person name="Rocha E.P.C."/>
            <person name="Denamur E."/>
        </authorList>
    </citation>
    <scope>NUCLEOTIDE SEQUENCE [LARGE SCALE GENOMIC DNA]</scope>
    <source>
        <strain>S88 / ExPEC</strain>
    </source>
</reference>
<protein>
    <recommendedName>
        <fullName evidence="1">D-aminoacyl-tRNA deacylase</fullName>
        <shortName evidence="1">DTD</shortName>
        <ecNumber evidence="1">3.1.1.96</ecNumber>
    </recommendedName>
    <alternativeName>
        <fullName evidence="1">Gly-tRNA(Ala) deacylase</fullName>
    </alternativeName>
</protein>
<evidence type="ECO:0000255" key="1">
    <source>
        <dbReference type="HAMAP-Rule" id="MF_00518"/>
    </source>
</evidence>
<proteinExistence type="inferred from homology"/>
<sequence>MIALIQRVTRASVTVEGEVTGEIGAGLLVLLGVEKDDDEQKANRLCERVLGYRIFSDAEGKMNLNVQQAGGSVLVVSQFTLAADTERGMRPSFSKGASPDRAEALYDYFVERCRQQEMNTQTGRFAADMQVSLVNDGPVTFWLQV</sequence>
<keyword id="KW-0963">Cytoplasm</keyword>
<keyword id="KW-0378">Hydrolase</keyword>
<keyword id="KW-1185">Reference proteome</keyword>
<keyword id="KW-0694">RNA-binding</keyword>
<keyword id="KW-0820">tRNA-binding</keyword>
<feature type="chain" id="PRO_1000127523" description="D-aminoacyl-tRNA deacylase">
    <location>
        <begin position="1"/>
        <end position="145"/>
    </location>
</feature>
<feature type="short sequence motif" description="Gly-cisPro motif, important for rejection of L-amino acids" evidence="1">
    <location>
        <begin position="137"/>
        <end position="138"/>
    </location>
</feature>
<gene>
    <name evidence="1" type="primary">dtd</name>
    <name type="ordered locus">ECS88_4332</name>
</gene>
<organism>
    <name type="scientific">Escherichia coli O45:K1 (strain S88 / ExPEC)</name>
    <dbReference type="NCBI Taxonomy" id="585035"/>
    <lineage>
        <taxon>Bacteria</taxon>
        <taxon>Pseudomonadati</taxon>
        <taxon>Pseudomonadota</taxon>
        <taxon>Gammaproteobacteria</taxon>
        <taxon>Enterobacterales</taxon>
        <taxon>Enterobacteriaceae</taxon>
        <taxon>Escherichia</taxon>
    </lineage>
</organism>
<dbReference type="EC" id="3.1.1.96" evidence="1"/>
<dbReference type="EMBL" id="CU928161">
    <property type="protein sequence ID" value="CAR05515.1"/>
    <property type="molecule type" value="Genomic_DNA"/>
</dbReference>
<dbReference type="RefSeq" id="WP_000560983.1">
    <property type="nucleotide sequence ID" value="NC_011742.1"/>
</dbReference>
<dbReference type="SMR" id="B7MI18"/>
<dbReference type="GeneID" id="93778051"/>
<dbReference type="KEGG" id="ecz:ECS88_4332"/>
<dbReference type="HOGENOM" id="CLU_076901_1_0_6"/>
<dbReference type="Proteomes" id="UP000000747">
    <property type="component" value="Chromosome"/>
</dbReference>
<dbReference type="GO" id="GO:0005737">
    <property type="term" value="C:cytoplasm"/>
    <property type="evidence" value="ECO:0007669"/>
    <property type="project" value="UniProtKB-SubCell"/>
</dbReference>
<dbReference type="GO" id="GO:0051500">
    <property type="term" value="F:D-tyrosyl-tRNA(Tyr) deacylase activity"/>
    <property type="evidence" value="ECO:0007669"/>
    <property type="project" value="TreeGrafter"/>
</dbReference>
<dbReference type="GO" id="GO:0106026">
    <property type="term" value="F:Gly-tRNA(Ala) deacylase activity"/>
    <property type="evidence" value="ECO:0007669"/>
    <property type="project" value="UniProtKB-UniRule"/>
</dbReference>
<dbReference type="GO" id="GO:0043908">
    <property type="term" value="F:Ser(Gly)-tRNA(Ala) hydrolase activity"/>
    <property type="evidence" value="ECO:0007669"/>
    <property type="project" value="UniProtKB-UniRule"/>
</dbReference>
<dbReference type="GO" id="GO:0000049">
    <property type="term" value="F:tRNA binding"/>
    <property type="evidence" value="ECO:0007669"/>
    <property type="project" value="UniProtKB-UniRule"/>
</dbReference>
<dbReference type="GO" id="GO:0019478">
    <property type="term" value="P:D-amino acid catabolic process"/>
    <property type="evidence" value="ECO:0007669"/>
    <property type="project" value="UniProtKB-UniRule"/>
</dbReference>
<dbReference type="CDD" id="cd00563">
    <property type="entry name" value="Dtyr_deacylase"/>
    <property type="match status" value="1"/>
</dbReference>
<dbReference type="FunFam" id="3.50.80.10:FF:000001">
    <property type="entry name" value="D-aminoacyl-tRNA deacylase"/>
    <property type="match status" value="1"/>
</dbReference>
<dbReference type="Gene3D" id="3.50.80.10">
    <property type="entry name" value="D-tyrosyl-tRNA(Tyr) deacylase"/>
    <property type="match status" value="1"/>
</dbReference>
<dbReference type="HAMAP" id="MF_00518">
    <property type="entry name" value="Deacylase_Dtd"/>
    <property type="match status" value="1"/>
</dbReference>
<dbReference type="InterPro" id="IPR003732">
    <property type="entry name" value="Daa-tRNA_deacyls_DTD"/>
</dbReference>
<dbReference type="InterPro" id="IPR023509">
    <property type="entry name" value="DTD-like_sf"/>
</dbReference>
<dbReference type="NCBIfam" id="TIGR00256">
    <property type="entry name" value="D-aminoacyl-tRNA deacylase"/>
    <property type="match status" value="1"/>
</dbReference>
<dbReference type="PANTHER" id="PTHR10472:SF5">
    <property type="entry name" value="D-AMINOACYL-TRNA DEACYLASE 1"/>
    <property type="match status" value="1"/>
</dbReference>
<dbReference type="PANTHER" id="PTHR10472">
    <property type="entry name" value="D-TYROSYL-TRNA TYR DEACYLASE"/>
    <property type="match status" value="1"/>
</dbReference>
<dbReference type="Pfam" id="PF02580">
    <property type="entry name" value="Tyr_Deacylase"/>
    <property type="match status" value="1"/>
</dbReference>
<dbReference type="SUPFAM" id="SSF69500">
    <property type="entry name" value="DTD-like"/>
    <property type="match status" value="1"/>
</dbReference>
<accession>B7MI18</accession>